<name>HIS4_SULNB</name>
<gene>
    <name evidence="1" type="primary">hisA</name>
    <name type="ordered locus">SUN_1951</name>
</gene>
<feature type="chain" id="PRO_1000063237" description="1-(5-phosphoribosyl)-5-[(5-phosphoribosylamino)methylideneamino] imidazole-4-carboxamide isomerase">
    <location>
        <begin position="1"/>
        <end position="237"/>
    </location>
</feature>
<feature type="active site" description="Proton acceptor" evidence="1">
    <location>
        <position position="8"/>
    </location>
</feature>
<feature type="active site" description="Proton donor" evidence="1">
    <location>
        <position position="127"/>
    </location>
</feature>
<sequence length="237" mass="25586">MTILPAIDLKDGKAVRLSKGLMESAKIYSDEPWQVAKRFEELGSEWVHLVDLNGAFAGKPENLEQIKKIRENCNLKLELGGGIRDEETIKMYLDLGIDRLILGSIAVKDPKFVREMAAKYPIVVGIDAIDGMVAVEGWGEVSDMKATDLAKEFADAGVEAIICTDVGRDGMMTGVNIDFTLAIKEASGLETIASGGLKDMTDINALIEAGIDGTIVGKAFYEGTLDLEEAFRTVNAG</sequence>
<organism>
    <name type="scientific">Sulfurovum sp. (strain NBC37-1)</name>
    <dbReference type="NCBI Taxonomy" id="387093"/>
    <lineage>
        <taxon>Bacteria</taxon>
        <taxon>Pseudomonadati</taxon>
        <taxon>Campylobacterota</taxon>
        <taxon>Epsilonproteobacteria</taxon>
        <taxon>Campylobacterales</taxon>
        <taxon>Sulfurovaceae</taxon>
        <taxon>Sulfurovum</taxon>
    </lineage>
</organism>
<evidence type="ECO:0000255" key="1">
    <source>
        <dbReference type="HAMAP-Rule" id="MF_01014"/>
    </source>
</evidence>
<reference key="1">
    <citation type="journal article" date="2007" name="Proc. Natl. Acad. Sci. U.S.A.">
        <title>Deep-sea vent epsilon-proteobacterial genomes provide insights into emergence of pathogens.</title>
        <authorList>
            <person name="Nakagawa S."/>
            <person name="Takaki Y."/>
            <person name="Shimamura S."/>
            <person name="Reysenbach A.-L."/>
            <person name="Takai K."/>
            <person name="Horikoshi K."/>
        </authorList>
    </citation>
    <scope>NUCLEOTIDE SEQUENCE [LARGE SCALE GENOMIC DNA]</scope>
    <source>
        <strain>NBC37-1</strain>
    </source>
</reference>
<accession>A6QBN6</accession>
<comment type="catalytic activity">
    <reaction evidence="1">
        <text>1-(5-phospho-beta-D-ribosyl)-5-[(5-phospho-beta-D-ribosylamino)methylideneamino]imidazole-4-carboxamide = 5-[(5-phospho-1-deoxy-D-ribulos-1-ylimino)methylamino]-1-(5-phospho-beta-D-ribosyl)imidazole-4-carboxamide</text>
        <dbReference type="Rhea" id="RHEA:15469"/>
        <dbReference type="ChEBI" id="CHEBI:58435"/>
        <dbReference type="ChEBI" id="CHEBI:58525"/>
        <dbReference type="EC" id="5.3.1.16"/>
    </reaction>
</comment>
<comment type="pathway">
    <text evidence="1">Amino-acid biosynthesis; L-histidine biosynthesis; L-histidine from 5-phospho-alpha-D-ribose 1-diphosphate: step 4/9.</text>
</comment>
<comment type="subcellular location">
    <subcellularLocation>
        <location evidence="1">Cytoplasm</location>
    </subcellularLocation>
</comment>
<comment type="similarity">
    <text evidence="1">Belongs to the HisA/HisF family.</text>
</comment>
<dbReference type="EC" id="5.3.1.16" evidence="1"/>
<dbReference type="EMBL" id="AP009179">
    <property type="protein sequence ID" value="BAF72895.1"/>
    <property type="molecule type" value="Genomic_DNA"/>
</dbReference>
<dbReference type="RefSeq" id="WP_012083716.1">
    <property type="nucleotide sequence ID" value="NC_009663.1"/>
</dbReference>
<dbReference type="SMR" id="A6QBN6"/>
<dbReference type="STRING" id="387093.SUN_1951"/>
<dbReference type="KEGG" id="sun:SUN_1951"/>
<dbReference type="eggNOG" id="COG0106">
    <property type="taxonomic scope" value="Bacteria"/>
</dbReference>
<dbReference type="HOGENOM" id="CLU_048577_1_2_7"/>
<dbReference type="OrthoDB" id="9807749at2"/>
<dbReference type="UniPathway" id="UPA00031">
    <property type="reaction ID" value="UER00009"/>
</dbReference>
<dbReference type="Proteomes" id="UP000006378">
    <property type="component" value="Chromosome"/>
</dbReference>
<dbReference type="GO" id="GO:0005737">
    <property type="term" value="C:cytoplasm"/>
    <property type="evidence" value="ECO:0007669"/>
    <property type="project" value="UniProtKB-SubCell"/>
</dbReference>
<dbReference type="GO" id="GO:0003949">
    <property type="term" value="F:1-(5-phosphoribosyl)-5-[(5-phosphoribosylamino)methylideneamino]imidazole-4-carboxamide isomerase activity"/>
    <property type="evidence" value="ECO:0007669"/>
    <property type="project" value="UniProtKB-UniRule"/>
</dbReference>
<dbReference type="GO" id="GO:0000105">
    <property type="term" value="P:L-histidine biosynthetic process"/>
    <property type="evidence" value="ECO:0007669"/>
    <property type="project" value="UniProtKB-UniRule"/>
</dbReference>
<dbReference type="GO" id="GO:0000162">
    <property type="term" value="P:L-tryptophan biosynthetic process"/>
    <property type="evidence" value="ECO:0007669"/>
    <property type="project" value="TreeGrafter"/>
</dbReference>
<dbReference type="CDD" id="cd04732">
    <property type="entry name" value="HisA"/>
    <property type="match status" value="1"/>
</dbReference>
<dbReference type="FunFam" id="3.20.20.70:FF:000009">
    <property type="entry name" value="1-(5-phosphoribosyl)-5-[(5-phosphoribosylamino)methylideneamino] imidazole-4-carboxamide isomerase"/>
    <property type="match status" value="1"/>
</dbReference>
<dbReference type="Gene3D" id="3.20.20.70">
    <property type="entry name" value="Aldolase class I"/>
    <property type="match status" value="1"/>
</dbReference>
<dbReference type="HAMAP" id="MF_01014">
    <property type="entry name" value="HisA"/>
    <property type="match status" value="1"/>
</dbReference>
<dbReference type="InterPro" id="IPR013785">
    <property type="entry name" value="Aldolase_TIM"/>
</dbReference>
<dbReference type="InterPro" id="IPR006062">
    <property type="entry name" value="His_biosynth"/>
</dbReference>
<dbReference type="InterPro" id="IPR006063">
    <property type="entry name" value="HisA_bact_arch"/>
</dbReference>
<dbReference type="InterPro" id="IPR044524">
    <property type="entry name" value="Isoase_HisA-like"/>
</dbReference>
<dbReference type="InterPro" id="IPR023016">
    <property type="entry name" value="Isoase_HisA-like_bact"/>
</dbReference>
<dbReference type="InterPro" id="IPR011060">
    <property type="entry name" value="RibuloseP-bd_barrel"/>
</dbReference>
<dbReference type="NCBIfam" id="TIGR00007">
    <property type="entry name" value="1-(5-phosphoribosyl)-5-[(5-phosphoribosylamino)methylideneamino]imidazole-4-carboxamide isomerase"/>
    <property type="match status" value="1"/>
</dbReference>
<dbReference type="PANTHER" id="PTHR43090">
    <property type="entry name" value="1-(5-PHOSPHORIBOSYL)-5-[(5-PHOSPHORIBOSYLAMINO)METHYLIDENEAMINO] IMIDAZOLE-4-CARBOXAMIDE ISOMERASE"/>
    <property type="match status" value="1"/>
</dbReference>
<dbReference type="PANTHER" id="PTHR43090:SF2">
    <property type="entry name" value="1-(5-PHOSPHORIBOSYL)-5-[(5-PHOSPHORIBOSYLAMINO)METHYLIDENEAMINO] IMIDAZOLE-4-CARBOXAMIDE ISOMERASE"/>
    <property type="match status" value="1"/>
</dbReference>
<dbReference type="Pfam" id="PF00977">
    <property type="entry name" value="His_biosynth"/>
    <property type="match status" value="1"/>
</dbReference>
<dbReference type="SUPFAM" id="SSF51366">
    <property type="entry name" value="Ribulose-phoshate binding barrel"/>
    <property type="match status" value="1"/>
</dbReference>
<proteinExistence type="inferred from homology"/>
<protein>
    <recommendedName>
        <fullName evidence="1">1-(5-phosphoribosyl)-5-[(5-phosphoribosylamino)methylideneamino] imidazole-4-carboxamide isomerase</fullName>
        <ecNumber evidence="1">5.3.1.16</ecNumber>
    </recommendedName>
    <alternativeName>
        <fullName evidence="1">Phosphoribosylformimino-5-aminoimidazole carboxamide ribotide isomerase</fullName>
    </alternativeName>
</protein>
<keyword id="KW-0028">Amino-acid biosynthesis</keyword>
<keyword id="KW-0963">Cytoplasm</keyword>
<keyword id="KW-0368">Histidine biosynthesis</keyword>
<keyword id="KW-0413">Isomerase</keyword>